<name>KTU_BOVIN</name>
<organism>
    <name type="scientific">Bos taurus</name>
    <name type="common">Bovine</name>
    <dbReference type="NCBI Taxonomy" id="9913"/>
    <lineage>
        <taxon>Eukaryota</taxon>
        <taxon>Metazoa</taxon>
        <taxon>Chordata</taxon>
        <taxon>Craniata</taxon>
        <taxon>Vertebrata</taxon>
        <taxon>Euteleostomi</taxon>
        <taxon>Mammalia</taxon>
        <taxon>Eutheria</taxon>
        <taxon>Laurasiatheria</taxon>
        <taxon>Artiodactyla</taxon>
        <taxon>Ruminantia</taxon>
        <taxon>Pecora</taxon>
        <taxon>Bovidae</taxon>
        <taxon>Bovinae</taxon>
        <taxon>Bos</taxon>
    </lineage>
</organism>
<evidence type="ECO:0000250" key="1">
    <source>
        <dbReference type="UniProtKB" id="B1H1W9"/>
    </source>
</evidence>
<evidence type="ECO:0000250" key="2">
    <source>
        <dbReference type="UniProtKB" id="Q9NVR5"/>
    </source>
</evidence>
<evidence type="ECO:0000255" key="3">
    <source>
        <dbReference type="HAMAP-Rule" id="MF_03069"/>
    </source>
</evidence>
<evidence type="ECO:0000256" key="4">
    <source>
        <dbReference type="SAM" id="MobiDB-lite"/>
    </source>
</evidence>
<evidence type="ECO:0000305" key="5"/>
<dbReference type="EMBL" id="AAFC03057991">
    <property type="status" value="NOT_ANNOTATED_CDS"/>
    <property type="molecule type" value="Genomic_DNA"/>
</dbReference>
<dbReference type="EMBL" id="AAFC03057994">
    <property type="status" value="NOT_ANNOTATED_CDS"/>
    <property type="molecule type" value="Genomic_DNA"/>
</dbReference>
<dbReference type="EMBL" id="BC120319">
    <property type="protein sequence ID" value="AAI20320.1"/>
    <property type="status" value="ALT_INIT"/>
    <property type="molecule type" value="mRNA"/>
</dbReference>
<dbReference type="RefSeq" id="NP_001069492.2">
    <property type="nucleotide sequence ID" value="NM_001076024.3"/>
</dbReference>
<dbReference type="SMR" id="Q0VC73"/>
<dbReference type="FunCoup" id="Q0VC73">
    <property type="interactions" value="1517"/>
</dbReference>
<dbReference type="STRING" id="9913.ENSBTAP00000042390"/>
<dbReference type="PaxDb" id="9913-ENSBTAP00000042390"/>
<dbReference type="Ensembl" id="ENSBTAT00000044951.4">
    <property type="protein sequence ID" value="ENSBTAP00000042390.3"/>
    <property type="gene ID" value="ENSBTAG00000004930.6"/>
</dbReference>
<dbReference type="GeneID" id="534465"/>
<dbReference type="KEGG" id="bta:534465"/>
<dbReference type="CTD" id="55172"/>
<dbReference type="VEuPathDB" id="HostDB:ENSBTAG00000004930"/>
<dbReference type="VGNC" id="VGNC:28119">
    <property type="gene designation" value="DNAAF2"/>
</dbReference>
<dbReference type="eggNOG" id="KOG4356">
    <property type="taxonomic scope" value="Eukaryota"/>
</dbReference>
<dbReference type="GeneTree" id="ENSGT00510000048466"/>
<dbReference type="HOGENOM" id="CLU_018349_0_0_1"/>
<dbReference type="InParanoid" id="Q0VC73"/>
<dbReference type="OMA" id="KQCMSLT"/>
<dbReference type="OrthoDB" id="546764at2759"/>
<dbReference type="TreeFam" id="TF336215"/>
<dbReference type="Proteomes" id="UP000009136">
    <property type="component" value="Chromosome 10"/>
</dbReference>
<dbReference type="Bgee" id="ENSBTAG00000004930">
    <property type="expression patterns" value="Expressed in thymus and 105 other cell types or tissues"/>
</dbReference>
<dbReference type="GO" id="GO:0036064">
    <property type="term" value="C:ciliary basal body"/>
    <property type="evidence" value="ECO:0007669"/>
    <property type="project" value="Ensembl"/>
</dbReference>
<dbReference type="GO" id="GO:0005737">
    <property type="term" value="C:cytoplasm"/>
    <property type="evidence" value="ECO:0000250"/>
    <property type="project" value="UniProtKB"/>
</dbReference>
<dbReference type="GO" id="GO:0005829">
    <property type="term" value="C:cytosol"/>
    <property type="evidence" value="ECO:0007669"/>
    <property type="project" value="Ensembl"/>
</dbReference>
<dbReference type="GO" id="GO:0120293">
    <property type="term" value="C:dynein axonemal particle"/>
    <property type="evidence" value="ECO:0000250"/>
    <property type="project" value="UniProtKB"/>
</dbReference>
<dbReference type="GO" id="GO:0005576">
    <property type="term" value="C:extracellular region"/>
    <property type="evidence" value="ECO:0007669"/>
    <property type="project" value="GOC"/>
</dbReference>
<dbReference type="GO" id="GO:0005794">
    <property type="term" value="C:Golgi apparatus"/>
    <property type="evidence" value="ECO:0007669"/>
    <property type="project" value="Ensembl"/>
</dbReference>
<dbReference type="GO" id="GO:0005730">
    <property type="term" value="C:nucleolus"/>
    <property type="evidence" value="ECO:0007669"/>
    <property type="project" value="Ensembl"/>
</dbReference>
<dbReference type="GO" id="GO:0005654">
    <property type="term" value="C:nucleoplasm"/>
    <property type="evidence" value="ECO:0007669"/>
    <property type="project" value="Ensembl"/>
</dbReference>
<dbReference type="GO" id="GO:0101031">
    <property type="term" value="C:protein folding chaperone complex"/>
    <property type="evidence" value="ECO:0007669"/>
    <property type="project" value="Ensembl"/>
</dbReference>
<dbReference type="GO" id="GO:0070286">
    <property type="term" value="P:axonemal dynein complex assembly"/>
    <property type="evidence" value="ECO:0000250"/>
    <property type="project" value="UniProtKB"/>
</dbReference>
<dbReference type="GO" id="GO:0060285">
    <property type="term" value="P:cilium-dependent cell motility"/>
    <property type="evidence" value="ECO:0000250"/>
    <property type="project" value="UniProtKB"/>
</dbReference>
<dbReference type="GO" id="GO:0003351">
    <property type="term" value="P:epithelial cilium movement involved in extracellular fluid movement"/>
    <property type="evidence" value="ECO:0000318"/>
    <property type="project" value="GO_Central"/>
</dbReference>
<dbReference type="GO" id="GO:0061966">
    <property type="term" value="P:establishment of left/right asymmetry"/>
    <property type="evidence" value="ECO:0007669"/>
    <property type="project" value="Ensembl"/>
</dbReference>
<dbReference type="GO" id="GO:0051649">
    <property type="term" value="P:establishment of localization in cell"/>
    <property type="evidence" value="ECO:0007669"/>
    <property type="project" value="Ensembl"/>
</dbReference>
<dbReference type="GO" id="GO:0001701">
    <property type="term" value="P:in utero embryonic development"/>
    <property type="evidence" value="ECO:0007669"/>
    <property type="project" value="Ensembl"/>
</dbReference>
<dbReference type="GO" id="GO:0036159">
    <property type="term" value="P:inner dynein arm assembly"/>
    <property type="evidence" value="ECO:0007669"/>
    <property type="project" value="Ensembl"/>
</dbReference>
<dbReference type="GO" id="GO:0036158">
    <property type="term" value="P:outer dynein arm assembly"/>
    <property type="evidence" value="ECO:0007669"/>
    <property type="project" value="Ensembl"/>
</dbReference>
<dbReference type="GO" id="GO:0032526">
    <property type="term" value="P:response to retinoic acid"/>
    <property type="evidence" value="ECO:0007669"/>
    <property type="project" value="Ensembl"/>
</dbReference>
<dbReference type="HAMAP" id="MF_03069">
    <property type="entry name" value="Kintoun"/>
    <property type="match status" value="1"/>
</dbReference>
<dbReference type="InterPro" id="IPR034727">
    <property type="entry name" value="Kintoun"/>
</dbReference>
<dbReference type="InterPro" id="IPR050734">
    <property type="entry name" value="PIH1/Kintoun_subfamily"/>
</dbReference>
<dbReference type="InterPro" id="IPR012981">
    <property type="entry name" value="PIH1_N"/>
</dbReference>
<dbReference type="InterPro" id="IPR041442">
    <property type="entry name" value="PIH1D1/2/3_CS-like"/>
</dbReference>
<dbReference type="PANTHER" id="PTHR22997">
    <property type="entry name" value="PIH1 DOMAIN-CONTAINING PROTEIN 1"/>
    <property type="match status" value="1"/>
</dbReference>
<dbReference type="PANTHER" id="PTHR22997:SF3">
    <property type="entry name" value="PROTEIN KINTOUN"/>
    <property type="match status" value="1"/>
</dbReference>
<dbReference type="Pfam" id="PF08190">
    <property type="entry name" value="PIH1"/>
    <property type="match status" value="1"/>
</dbReference>
<dbReference type="Pfam" id="PF18201">
    <property type="entry name" value="PIH1_CS"/>
    <property type="match status" value="1"/>
</dbReference>
<comment type="function">
    <text evidence="3">Required for cytoplasmic pre-assembly of axonemal dyneins, thereby playing a central role in motility in cilia and flagella. Involved in pre-assembly of dynein arm complexes in the cytoplasm before intraflagellar transport loads them for the ciliary compartment.</text>
</comment>
<comment type="subunit">
    <text evidence="3">Interacts with CFAP300. Interacts with DNAI2 and HSPA1A. Interacts with DNAAF4. Interacts with DNAAF6/PIH1D3.</text>
</comment>
<comment type="subcellular location">
    <subcellularLocation>
        <location evidence="3">Cytoplasm</location>
    </subcellularLocation>
    <subcellularLocation>
        <location evidence="1">Dynein axonemal particle</location>
    </subcellularLocation>
    <text evidence="3">Localizes in the apical cytoplasm around the gamma-tubulin-positive pericentriolar region, not in the cilia.</text>
</comment>
<comment type="similarity">
    <text evidence="3">Belongs to the PIH1 family. Kintoun subfamily.</text>
</comment>
<comment type="sequence caution" evidence="5">
    <conflict type="erroneous initiation">
        <sequence resource="EMBL-CDS" id="AAI20320"/>
    </conflict>
    <text>Truncated N-terminus.</text>
</comment>
<gene>
    <name evidence="3" type="primary">DNAAF2</name>
    <name evidence="3" type="synonym">KTU</name>
</gene>
<reference key="1">
    <citation type="journal article" date="2009" name="Science">
        <title>The genome sequence of taurine cattle: a window to ruminant biology and evolution.</title>
        <authorList>
            <consortium name="The bovine genome sequencing and analysis consortium"/>
        </authorList>
    </citation>
    <scope>NUCLEOTIDE SEQUENCE [LARGE SCALE GENOMIC DNA]</scope>
    <source>
        <strain>Hereford</strain>
    </source>
</reference>
<reference key="2">
    <citation type="submission" date="2006-08" db="EMBL/GenBank/DDBJ databases">
        <authorList>
            <consortium name="NIH - Mammalian Gene Collection (MGC) project"/>
        </authorList>
    </citation>
    <scope>NUCLEOTIDE SEQUENCE [LARGE SCALE MRNA] OF 408-422</scope>
    <source>
        <strain>Hereford</strain>
        <tissue>Fetal muscle</tissue>
    </source>
</reference>
<keyword id="KW-0963">Cytoplasm</keyword>
<keyword id="KW-0597">Phosphoprotein</keyword>
<keyword id="KW-1185">Reference proteome</keyword>
<accession>Q0VC73</accession>
<proteinExistence type="evidence at transcript level"/>
<protein>
    <recommendedName>
        <fullName evidence="3">Protein kintoun</fullName>
    </recommendedName>
    <alternativeName>
        <fullName evidence="3">Dynein assembly factor 2, axonemal</fullName>
    </alternativeName>
</protein>
<feature type="chain" id="PRO_0000283065" description="Protein kintoun">
    <location>
        <begin position="1"/>
        <end position="829"/>
    </location>
</feature>
<feature type="region of interest" description="Disordered" evidence="4">
    <location>
        <begin position="197"/>
        <end position="255"/>
    </location>
</feature>
<feature type="region of interest" description="Disordered" evidence="4">
    <location>
        <begin position="349"/>
        <end position="377"/>
    </location>
</feature>
<feature type="region of interest" description="Disordered" evidence="4">
    <location>
        <begin position="400"/>
        <end position="465"/>
    </location>
</feature>
<feature type="region of interest" description="Disordered" evidence="4">
    <location>
        <begin position="478"/>
        <end position="505"/>
    </location>
</feature>
<feature type="region of interest" description="Disordered" evidence="4">
    <location>
        <begin position="667"/>
        <end position="698"/>
    </location>
</feature>
<feature type="compositionally biased region" description="Low complexity" evidence="4">
    <location>
        <begin position="352"/>
        <end position="371"/>
    </location>
</feature>
<feature type="compositionally biased region" description="Basic and acidic residues" evidence="4">
    <location>
        <begin position="416"/>
        <end position="430"/>
    </location>
</feature>
<feature type="compositionally biased region" description="Basic and acidic residues" evidence="4">
    <location>
        <begin position="484"/>
        <end position="497"/>
    </location>
</feature>
<feature type="compositionally biased region" description="Basic and acidic residues" evidence="4">
    <location>
        <begin position="670"/>
        <end position="691"/>
    </location>
</feature>
<feature type="modified residue" description="Phosphoserine" evidence="2">
    <location>
        <position position="450"/>
    </location>
</feature>
<feature type="modified residue" description="Phosphoserine" evidence="2">
    <location>
        <position position="632"/>
    </location>
</feature>
<sequence length="829" mass="90970">MAKEAASSPLEDLDLSGEEVQRLTSAFQDPEFRRMFSEYAEELTDPENRRRYEEEITALERERGVEVRFVHPEPGHVLRTSLDGTRRCFVNVCSNALVGAPSSQPGSGSAVSGRQWSLPYSLAPGREYAWGRGTRYTVYDVVFHPDAIALARRHERFRQMLDATALEAVEKQFGVKLDRRNAKTLKIKYKGTPDAAVLRTPLPGGAPARPEGEPESPFPDFPYPYRYPAAGASAAVPRPQAPSPPEAVRQPAPTEPRYSVVQRHHVDLQDYRCSRDSAPGTVPQELVVTIELPLLRSAEQAALEVTGKLLCLDSRKPDYRLRLSLPYPVDDSRGKAQFNKARRQLVVTLPVAPTASRPEPAASPEEAADPPGTDGAACASACRGEAGPAGVCAGDAISGPSRTRAADAGITTPDAPGKERVAKSEERDFGGQEISTTGTREEPPSGAGNSPGDRGGGALSTSWGDLDAGLSVGSASVRPTLGVEARETREGTGREPAYRAMGGPGTDRGEALCPPLQCSQDEESLTLLVQVPWILLQSLQGEVNPLWYKLSFSTQDLVYYSFFLQFTPENKLSTKEPEVSISSNNAVINLAKSPECHGYWREWYYGLNNYCLEERLFVNEDNVNEFLEEVLSPPFKQTLPLTPPLIEVLQVTDSKIEIHAKLQECSNSEQLHEKEERVHEGSPLTEKENTEHATISTTDSASSVAVTVLEADRCGSATCLQQGALDVSQKLFAESQQPKSEKEREFIKDKSAVYANERKDNLKEPVITEEKELDGNHPSSLLNKTAVRDTPGFDHIKETNMQDGSVQIIKDHVTHCSFSFQNNLLYDLD</sequence>